<organism>
    <name type="scientific">Brucella abortus (strain S19)</name>
    <dbReference type="NCBI Taxonomy" id="430066"/>
    <lineage>
        <taxon>Bacteria</taxon>
        <taxon>Pseudomonadati</taxon>
        <taxon>Pseudomonadota</taxon>
        <taxon>Alphaproteobacteria</taxon>
        <taxon>Hyphomicrobiales</taxon>
        <taxon>Brucellaceae</taxon>
        <taxon>Brucella/Ochrobactrum group</taxon>
        <taxon>Brucella</taxon>
    </lineage>
</organism>
<gene>
    <name evidence="1" type="primary">gatA</name>
    <name type="ordered locus">BAbS19_II06040</name>
</gene>
<proteinExistence type="inferred from homology"/>
<reference key="1">
    <citation type="journal article" date="2008" name="PLoS ONE">
        <title>Genome sequence of Brucella abortus vaccine strain S19 compared to virulent strains yields candidate virulence genes.</title>
        <authorList>
            <person name="Crasta O.R."/>
            <person name="Folkerts O."/>
            <person name="Fei Z."/>
            <person name="Mane S.P."/>
            <person name="Evans C."/>
            <person name="Martino-Catt S."/>
            <person name="Bricker B."/>
            <person name="Yu G."/>
            <person name="Du L."/>
            <person name="Sobral B.W."/>
        </authorList>
    </citation>
    <scope>NUCLEOTIDE SEQUENCE [LARGE SCALE GENOMIC DNA]</scope>
    <source>
        <strain>S19</strain>
    </source>
</reference>
<accession>B2SB62</accession>
<comment type="function">
    <text evidence="1">Allows the formation of correctly charged Gln-tRNA(Gln) through the transamidation of misacylated Glu-tRNA(Gln) in organisms which lack glutaminyl-tRNA synthetase. The reaction takes place in the presence of glutamine and ATP through an activated gamma-phospho-Glu-tRNA(Gln).</text>
</comment>
<comment type="catalytic activity">
    <reaction evidence="1">
        <text>L-glutamyl-tRNA(Gln) + L-glutamine + ATP + H2O = L-glutaminyl-tRNA(Gln) + L-glutamate + ADP + phosphate + H(+)</text>
        <dbReference type="Rhea" id="RHEA:17521"/>
        <dbReference type="Rhea" id="RHEA-COMP:9681"/>
        <dbReference type="Rhea" id="RHEA-COMP:9684"/>
        <dbReference type="ChEBI" id="CHEBI:15377"/>
        <dbReference type="ChEBI" id="CHEBI:15378"/>
        <dbReference type="ChEBI" id="CHEBI:29985"/>
        <dbReference type="ChEBI" id="CHEBI:30616"/>
        <dbReference type="ChEBI" id="CHEBI:43474"/>
        <dbReference type="ChEBI" id="CHEBI:58359"/>
        <dbReference type="ChEBI" id="CHEBI:78520"/>
        <dbReference type="ChEBI" id="CHEBI:78521"/>
        <dbReference type="ChEBI" id="CHEBI:456216"/>
        <dbReference type="EC" id="6.3.5.7"/>
    </reaction>
</comment>
<comment type="subunit">
    <text evidence="1">Heterotrimer of A, B and C subunits.</text>
</comment>
<comment type="similarity">
    <text evidence="1">Belongs to the amidase family. GatA subfamily.</text>
</comment>
<sequence length="493" mass="52399">MSELTALTIAEARDKLKAKAITATELTDAYLSAIDAANDAINAYVAVTHDQARSMAKASDERIAKGEAGALEGIPLGVKDLFATKGVHTQACSHILDGFKPEYESTVTANLWADGAVMLGKLNMDEVAMGSSNETSYYGPVKNPWRAKGSNADLVPGGSSGGSAAAVAAHLCAGATATDTGGSIRQPAAFTGTVGIKPTYGRVSRWGTVAFASSLDQAGPIARDVRDAAILMKSMASLDLKDTTSVDLPVPDYEAALGRSVKGMKIGIPREYRVDGMPGEIEELWQKGIQYLKDAGAEIVDISLPHTKYALPAYYIVAPAEASSNLARYDGVRYGLRVPGKDIADMYEQTRAAGFGKEVKRRIMIGTYVLSAGYYDAYYLRAQKVRTLIKKDFEDVFAKGVDAILTPATPSAAFGLADEVLANDPVKMYLNDIFTVTVNMAGLPGIAVPAGLNGQGLPLGLQLIGRPFEEETLFQAAHVIEQAAGRFTPAKWW</sequence>
<feature type="chain" id="PRO_1000095110" description="Glutamyl-tRNA(Gln) amidotransferase subunit A">
    <location>
        <begin position="1"/>
        <end position="493"/>
    </location>
</feature>
<feature type="active site" description="Charge relay system" evidence="1">
    <location>
        <position position="79"/>
    </location>
</feature>
<feature type="active site" description="Charge relay system" evidence="1">
    <location>
        <position position="159"/>
    </location>
</feature>
<feature type="active site" description="Acyl-ester intermediate" evidence="1">
    <location>
        <position position="183"/>
    </location>
</feature>
<protein>
    <recommendedName>
        <fullName evidence="1">Glutamyl-tRNA(Gln) amidotransferase subunit A</fullName>
        <shortName evidence="1">Glu-ADT subunit A</shortName>
        <ecNumber evidence="1">6.3.5.7</ecNumber>
    </recommendedName>
</protein>
<keyword id="KW-0067">ATP-binding</keyword>
<keyword id="KW-0436">Ligase</keyword>
<keyword id="KW-0547">Nucleotide-binding</keyword>
<keyword id="KW-0648">Protein biosynthesis</keyword>
<dbReference type="EC" id="6.3.5.7" evidence="1"/>
<dbReference type="EMBL" id="CP000888">
    <property type="protein sequence ID" value="ACD74099.1"/>
    <property type="molecule type" value="Genomic_DNA"/>
</dbReference>
<dbReference type="RefSeq" id="WP_002966039.1">
    <property type="nucleotide sequence ID" value="NC_010740.1"/>
</dbReference>
<dbReference type="SMR" id="B2SB62"/>
<dbReference type="GeneID" id="93015467"/>
<dbReference type="KEGG" id="bmc:BAbS19_II06040"/>
<dbReference type="HOGENOM" id="CLU_009600_0_3_5"/>
<dbReference type="Proteomes" id="UP000002565">
    <property type="component" value="Chromosome 2"/>
</dbReference>
<dbReference type="GO" id="GO:0030956">
    <property type="term" value="C:glutamyl-tRNA(Gln) amidotransferase complex"/>
    <property type="evidence" value="ECO:0007669"/>
    <property type="project" value="InterPro"/>
</dbReference>
<dbReference type="GO" id="GO:0005524">
    <property type="term" value="F:ATP binding"/>
    <property type="evidence" value="ECO:0007669"/>
    <property type="project" value="UniProtKB-KW"/>
</dbReference>
<dbReference type="GO" id="GO:0050567">
    <property type="term" value="F:glutaminyl-tRNA synthase (glutamine-hydrolyzing) activity"/>
    <property type="evidence" value="ECO:0007669"/>
    <property type="project" value="UniProtKB-UniRule"/>
</dbReference>
<dbReference type="GO" id="GO:0006412">
    <property type="term" value="P:translation"/>
    <property type="evidence" value="ECO:0007669"/>
    <property type="project" value="UniProtKB-UniRule"/>
</dbReference>
<dbReference type="Gene3D" id="3.90.1300.10">
    <property type="entry name" value="Amidase signature (AS) domain"/>
    <property type="match status" value="1"/>
</dbReference>
<dbReference type="HAMAP" id="MF_00120">
    <property type="entry name" value="GatA"/>
    <property type="match status" value="1"/>
</dbReference>
<dbReference type="InterPro" id="IPR000120">
    <property type="entry name" value="Amidase"/>
</dbReference>
<dbReference type="InterPro" id="IPR020556">
    <property type="entry name" value="Amidase_CS"/>
</dbReference>
<dbReference type="InterPro" id="IPR023631">
    <property type="entry name" value="Amidase_dom"/>
</dbReference>
<dbReference type="InterPro" id="IPR036928">
    <property type="entry name" value="AS_sf"/>
</dbReference>
<dbReference type="InterPro" id="IPR004412">
    <property type="entry name" value="GatA"/>
</dbReference>
<dbReference type="NCBIfam" id="TIGR00132">
    <property type="entry name" value="gatA"/>
    <property type="match status" value="1"/>
</dbReference>
<dbReference type="PANTHER" id="PTHR11895:SF151">
    <property type="entry name" value="GLUTAMYL-TRNA(GLN) AMIDOTRANSFERASE SUBUNIT A"/>
    <property type="match status" value="1"/>
</dbReference>
<dbReference type="PANTHER" id="PTHR11895">
    <property type="entry name" value="TRANSAMIDASE"/>
    <property type="match status" value="1"/>
</dbReference>
<dbReference type="Pfam" id="PF01425">
    <property type="entry name" value="Amidase"/>
    <property type="match status" value="1"/>
</dbReference>
<dbReference type="SUPFAM" id="SSF75304">
    <property type="entry name" value="Amidase signature (AS) enzymes"/>
    <property type="match status" value="1"/>
</dbReference>
<dbReference type="PROSITE" id="PS00571">
    <property type="entry name" value="AMIDASES"/>
    <property type="match status" value="1"/>
</dbReference>
<name>GATA_BRUA1</name>
<evidence type="ECO:0000255" key="1">
    <source>
        <dbReference type="HAMAP-Rule" id="MF_00120"/>
    </source>
</evidence>